<comment type="catalytic activity">
    <reaction evidence="1">
        <text>tRNA(Leu) + L-leucine + ATP = L-leucyl-tRNA(Leu) + AMP + diphosphate</text>
        <dbReference type="Rhea" id="RHEA:11688"/>
        <dbReference type="Rhea" id="RHEA-COMP:9613"/>
        <dbReference type="Rhea" id="RHEA-COMP:9622"/>
        <dbReference type="ChEBI" id="CHEBI:30616"/>
        <dbReference type="ChEBI" id="CHEBI:33019"/>
        <dbReference type="ChEBI" id="CHEBI:57427"/>
        <dbReference type="ChEBI" id="CHEBI:78442"/>
        <dbReference type="ChEBI" id="CHEBI:78494"/>
        <dbReference type="ChEBI" id="CHEBI:456215"/>
        <dbReference type="EC" id="6.1.1.4"/>
    </reaction>
</comment>
<comment type="subcellular location">
    <subcellularLocation>
        <location evidence="1">Cytoplasm</location>
    </subcellularLocation>
</comment>
<comment type="similarity">
    <text evidence="1">Belongs to the class-I aminoacyl-tRNA synthetase family.</text>
</comment>
<proteinExistence type="inferred from homology"/>
<keyword id="KW-0030">Aminoacyl-tRNA synthetase</keyword>
<keyword id="KW-0067">ATP-binding</keyword>
<keyword id="KW-0963">Cytoplasm</keyword>
<keyword id="KW-0436">Ligase</keyword>
<keyword id="KW-0547">Nucleotide-binding</keyword>
<keyword id="KW-0648">Protein biosynthesis</keyword>
<name>SYL_RICM5</name>
<evidence type="ECO:0000255" key="1">
    <source>
        <dbReference type="HAMAP-Rule" id="MF_00049"/>
    </source>
</evidence>
<feature type="chain" id="PRO_1000057347" description="Leucine--tRNA ligase">
    <location>
        <begin position="1"/>
        <end position="835"/>
    </location>
</feature>
<feature type="short sequence motif" description="'HIGH' region">
    <location>
        <begin position="36"/>
        <end position="46"/>
    </location>
</feature>
<feature type="short sequence motif" description="'KMSKS' region">
    <location>
        <begin position="602"/>
        <end position="606"/>
    </location>
</feature>
<feature type="binding site" evidence="1">
    <location>
        <position position="605"/>
    </location>
    <ligand>
        <name>ATP</name>
        <dbReference type="ChEBI" id="CHEBI:30616"/>
    </ligand>
</feature>
<protein>
    <recommendedName>
        <fullName evidence="1">Leucine--tRNA ligase</fullName>
        <ecNumber evidence="1">6.1.1.4</ecNumber>
    </recommendedName>
    <alternativeName>
        <fullName evidence="1">Leucyl-tRNA synthetase</fullName>
        <shortName evidence="1">LeuRS</shortName>
    </alternativeName>
</protein>
<organism>
    <name type="scientific">Rickettsia massiliae (strain Mtu5)</name>
    <dbReference type="NCBI Taxonomy" id="416276"/>
    <lineage>
        <taxon>Bacteria</taxon>
        <taxon>Pseudomonadati</taxon>
        <taxon>Pseudomonadota</taxon>
        <taxon>Alphaproteobacteria</taxon>
        <taxon>Rickettsiales</taxon>
        <taxon>Rickettsiaceae</taxon>
        <taxon>Rickettsieae</taxon>
        <taxon>Rickettsia</taxon>
        <taxon>spotted fever group</taxon>
    </lineage>
</organism>
<dbReference type="EC" id="6.1.1.4" evidence="1"/>
<dbReference type="EMBL" id="CP000683">
    <property type="protein sequence ID" value="ABV84781.1"/>
    <property type="molecule type" value="Genomic_DNA"/>
</dbReference>
<dbReference type="RefSeq" id="WP_012152756.1">
    <property type="nucleotide sequence ID" value="NC_009900.1"/>
</dbReference>
<dbReference type="SMR" id="A8F1J5"/>
<dbReference type="KEGG" id="rms:RMA_0602"/>
<dbReference type="HOGENOM" id="CLU_004427_0_0_5"/>
<dbReference type="Proteomes" id="UP000001311">
    <property type="component" value="Chromosome"/>
</dbReference>
<dbReference type="GO" id="GO:0005737">
    <property type="term" value="C:cytoplasm"/>
    <property type="evidence" value="ECO:0007669"/>
    <property type="project" value="UniProtKB-SubCell"/>
</dbReference>
<dbReference type="GO" id="GO:0002161">
    <property type="term" value="F:aminoacyl-tRNA deacylase activity"/>
    <property type="evidence" value="ECO:0007669"/>
    <property type="project" value="InterPro"/>
</dbReference>
<dbReference type="GO" id="GO:0005524">
    <property type="term" value="F:ATP binding"/>
    <property type="evidence" value="ECO:0007669"/>
    <property type="project" value="UniProtKB-UniRule"/>
</dbReference>
<dbReference type="GO" id="GO:0004823">
    <property type="term" value="F:leucine-tRNA ligase activity"/>
    <property type="evidence" value="ECO:0007669"/>
    <property type="project" value="UniProtKB-UniRule"/>
</dbReference>
<dbReference type="GO" id="GO:0006429">
    <property type="term" value="P:leucyl-tRNA aminoacylation"/>
    <property type="evidence" value="ECO:0007669"/>
    <property type="project" value="UniProtKB-UniRule"/>
</dbReference>
<dbReference type="CDD" id="cd07958">
    <property type="entry name" value="Anticodon_Ia_Leu_BEm"/>
    <property type="match status" value="1"/>
</dbReference>
<dbReference type="CDD" id="cd00812">
    <property type="entry name" value="LeuRS_core"/>
    <property type="match status" value="1"/>
</dbReference>
<dbReference type="FunFam" id="1.10.730.10:FF:000081">
    <property type="entry name" value="Leucine--tRNA ligase"/>
    <property type="match status" value="1"/>
</dbReference>
<dbReference type="FunFam" id="3.10.20.590:FF:000001">
    <property type="entry name" value="Leucine--tRNA ligase"/>
    <property type="match status" value="1"/>
</dbReference>
<dbReference type="FunFam" id="3.40.50.620:FF:000003">
    <property type="entry name" value="Leucine--tRNA ligase"/>
    <property type="match status" value="1"/>
</dbReference>
<dbReference type="FunFam" id="3.40.50.620:FF:000051">
    <property type="entry name" value="Leucine--tRNA ligase"/>
    <property type="match status" value="1"/>
</dbReference>
<dbReference type="Gene3D" id="2.20.28.290">
    <property type="match status" value="1"/>
</dbReference>
<dbReference type="Gene3D" id="3.10.20.590">
    <property type="match status" value="1"/>
</dbReference>
<dbReference type="Gene3D" id="3.40.50.620">
    <property type="entry name" value="HUPs"/>
    <property type="match status" value="2"/>
</dbReference>
<dbReference type="Gene3D" id="1.10.730.10">
    <property type="entry name" value="Isoleucyl-tRNA Synthetase, Domain 1"/>
    <property type="match status" value="2"/>
</dbReference>
<dbReference type="HAMAP" id="MF_00049_B">
    <property type="entry name" value="Leu_tRNA_synth_B"/>
    <property type="match status" value="1"/>
</dbReference>
<dbReference type="InterPro" id="IPR001412">
    <property type="entry name" value="aa-tRNA-synth_I_CS"/>
</dbReference>
<dbReference type="InterPro" id="IPR002300">
    <property type="entry name" value="aa-tRNA-synth_Ia"/>
</dbReference>
<dbReference type="InterPro" id="IPR002302">
    <property type="entry name" value="Leu-tRNA-ligase"/>
</dbReference>
<dbReference type="InterPro" id="IPR025709">
    <property type="entry name" value="Leu_tRNA-synth_edit"/>
</dbReference>
<dbReference type="InterPro" id="IPR013155">
    <property type="entry name" value="M/V/L/I-tRNA-synth_anticd-bd"/>
</dbReference>
<dbReference type="InterPro" id="IPR015413">
    <property type="entry name" value="Methionyl/Leucyl_tRNA_Synth"/>
</dbReference>
<dbReference type="InterPro" id="IPR014729">
    <property type="entry name" value="Rossmann-like_a/b/a_fold"/>
</dbReference>
<dbReference type="InterPro" id="IPR009080">
    <property type="entry name" value="tRNAsynth_Ia_anticodon-bd"/>
</dbReference>
<dbReference type="InterPro" id="IPR009008">
    <property type="entry name" value="Val/Leu/Ile-tRNA-synth_edit"/>
</dbReference>
<dbReference type="NCBIfam" id="TIGR00396">
    <property type="entry name" value="leuS_bact"/>
    <property type="match status" value="1"/>
</dbReference>
<dbReference type="PANTHER" id="PTHR43740:SF2">
    <property type="entry name" value="LEUCINE--TRNA LIGASE, MITOCHONDRIAL"/>
    <property type="match status" value="1"/>
</dbReference>
<dbReference type="PANTHER" id="PTHR43740">
    <property type="entry name" value="LEUCYL-TRNA SYNTHETASE"/>
    <property type="match status" value="1"/>
</dbReference>
<dbReference type="Pfam" id="PF08264">
    <property type="entry name" value="Anticodon_1"/>
    <property type="match status" value="1"/>
</dbReference>
<dbReference type="Pfam" id="PF00133">
    <property type="entry name" value="tRNA-synt_1"/>
    <property type="match status" value="2"/>
</dbReference>
<dbReference type="Pfam" id="PF13603">
    <property type="entry name" value="tRNA-synt_1_2"/>
    <property type="match status" value="1"/>
</dbReference>
<dbReference type="Pfam" id="PF09334">
    <property type="entry name" value="tRNA-synt_1g"/>
    <property type="match status" value="1"/>
</dbReference>
<dbReference type="PRINTS" id="PR00985">
    <property type="entry name" value="TRNASYNTHLEU"/>
</dbReference>
<dbReference type="SUPFAM" id="SSF47323">
    <property type="entry name" value="Anticodon-binding domain of a subclass of class I aminoacyl-tRNA synthetases"/>
    <property type="match status" value="1"/>
</dbReference>
<dbReference type="SUPFAM" id="SSF52374">
    <property type="entry name" value="Nucleotidylyl transferase"/>
    <property type="match status" value="1"/>
</dbReference>
<dbReference type="SUPFAM" id="SSF50677">
    <property type="entry name" value="ValRS/IleRS/LeuRS editing domain"/>
    <property type="match status" value="1"/>
</dbReference>
<dbReference type="PROSITE" id="PS00178">
    <property type="entry name" value="AA_TRNA_LIGASE_I"/>
    <property type="match status" value="1"/>
</dbReference>
<accession>A8F1J5</accession>
<gene>
    <name evidence="1" type="primary">leuS</name>
    <name type="ordered locus">RMA_0602</name>
</gene>
<sequence>MNQIEQKWQHIWQEEKAFEVSNASSKPKYYVLEMLPYPSGKIHVGHVRNYSIGDVIARFMTMQGFNVLHPMGWDAFGLPAENAAIKNNSHPKKWTYSNIENMKKQLKSMGFSYDWSREINSCDPEYYKHEQKFFLELYERNLAYQKESLVNWDPVDNTVLANEQVVDGRGWRSGAIVAKRYLKQWFLKITDYAEELLNEIQNLKEWPEAVRSMQEKWIGKSIGANFHFKIKDNEETTIEVFSTKPETIFGASFIGIAFNHPIIERLVSKTPEILAFITKCSHITGSSELEKAEKEGVFTGLFVIHPFDSNIVLPVIITNFVLMDYGTGAIFGCPANDERDHELAVKMNLSIKQVIKADMDVQKTAYTEDGILVNSDFLNGLTSNEAKQEVIGEFEKLGIGKRSVNYRLKDWGISRQRFWGCPIPIIHCETCGIVPVPYKDLPVTLPDDVNFDGHGNPLDHHPSWKHVDCPKCDKPAVRETDTFDTFFESSWYFTRYCNSNAIEMTDKKACDYWLPVDKYIGGIEHAVMHLLYARFFTKVMNEQKYVSVREPFKGLFTQGMVLHATYKDEHNNWLYPEEVVKKGNEFFHKESNNRVVQGRIEKMSKSKKNLIDLETMQEQYGADAIRLFVLSDSPPEKDLEWSASGIEGCSRFINKLEYMFKAIDSLKDDVNSEINKELNRLVHFTIKLVAEDIKHFALNRAIARMRELSNAISAEISKDKIDVKTVRHGFNVLVQLLNPFIPHITEEIWQKLGNKKRLYNSSFPAFDESMLELDTYIMAVQVNGKLRDTYEFKTSVSEDEIKQVTVSLPKVQKFLEGKEPKKIILVPRKIVNILV</sequence>
<reference key="1">
    <citation type="journal article" date="2007" name="Genome Res.">
        <title>Lateral gene transfer between obligate intracellular bacteria: evidence from the Rickettsia massiliae genome.</title>
        <authorList>
            <person name="Blanc G."/>
            <person name="Ogata H."/>
            <person name="Robert C."/>
            <person name="Audic S."/>
            <person name="Claverie J.-M."/>
            <person name="Raoult D."/>
        </authorList>
    </citation>
    <scope>NUCLEOTIDE SEQUENCE [LARGE SCALE GENOMIC DNA]</scope>
    <source>
        <strain>Mtu5</strain>
    </source>
</reference>